<feature type="chain" id="PRO_0000094197" description="Elongation factor P">
    <location>
        <begin position="1"/>
        <end position="185"/>
    </location>
</feature>
<reference key="1">
    <citation type="journal article" date="2006" name="J. Bacteriol.">
        <title>Pathogenomic sequence analysis of Bacillus cereus and Bacillus thuringiensis isolates closely related to Bacillus anthracis.</title>
        <authorList>
            <person name="Han C.S."/>
            <person name="Xie G."/>
            <person name="Challacombe J.F."/>
            <person name="Altherr M.R."/>
            <person name="Bhotika S.S."/>
            <person name="Bruce D."/>
            <person name="Campbell C.S."/>
            <person name="Campbell M.L."/>
            <person name="Chen J."/>
            <person name="Chertkov O."/>
            <person name="Cleland C."/>
            <person name="Dimitrijevic M."/>
            <person name="Doggett N.A."/>
            <person name="Fawcett J.J."/>
            <person name="Glavina T."/>
            <person name="Goodwin L.A."/>
            <person name="Hill K.K."/>
            <person name="Hitchcock P."/>
            <person name="Jackson P.J."/>
            <person name="Keim P."/>
            <person name="Kewalramani A.R."/>
            <person name="Longmire J."/>
            <person name="Lucas S."/>
            <person name="Malfatti S."/>
            <person name="McMurry K."/>
            <person name="Meincke L.J."/>
            <person name="Misra M."/>
            <person name="Moseman B.L."/>
            <person name="Mundt M."/>
            <person name="Munk A.C."/>
            <person name="Okinaka R.T."/>
            <person name="Parson-Quintana B."/>
            <person name="Reilly L.P."/>
            <person name="Richardson P."/>
            <person name="Robinson D.L."/>
            <person name="Rubin E."/>
            <person name="Saunders E."/>
            <person name="Tapia R."/>
            <person name="Tesmer J.G."/>
            <person name="Thayer N."/>
            <person name="Thompson L.S."/>
            <person name="Tice H."/>
            <person name="Ticknor L.O."/>
            <person name="Wills P.L."/>
            <person name="Brettin T.S."/>
            <person name="Gilna P."/>
        </authorList>
    </citation>
    <scope>NUCLEOTIDE SEQUENCE [LARGE SCALE GENOMIC DNA]</scope>
    <source>
        <strain>97-27</strain>
    </source>
</reference>
<name>EFP_BACHK</name>
<keyword id="KW-0963">Cytoplasm</keyword>
<keyword id="KW-0251">Elongation factor</keyword>
<keyword id="KW-0648">Protein biosynthesis</keyword>
<dbReference type="EMBL" id="AE017355">
    <property type="protein sequence ID" value="AAT60777.1"/>
    <property type="molecule type" value="Genomic_DNA"/>
</dbReference>
<dbReference type="RefSeq" id="WP_000626507.1">
    <property type="nucleotide sequence ID" value="NC_005957.1"/>
</dbReference>
<dbReference type="RefSeq" id="YP_038258.1">
    <property type="nucleotide sequence ID" value="NC_005957.1"/>
</dbReference>
<dbReference type="SMR" id="Q6HDW8"/>
<dbReference type="GeneID" id="45024081"/>
<dbReference type="KEGG" id="btk:BT9727_3939"/>
<dbReference type="PATRIC" id="fig|281309.8.peg.4202"/>
<dbReference type="HOGENOM" id="CLU_074944_0_1_9"/>
<dbReference type="UniPathway" id="UPA00345"/>
<dbReference type="Proteomes" id="UP000001301">
    <property type="component" value="Chromosome"/>
</dbReference>
<dbReference type="GO" id="GO:0005737">
    <property type="term" value="C:cytoplasm"/>
    <property type="evidence" value="ECO:0007669"/>
    <property type="project" value="UniProtKB-SubCell"/>
</dbReference>
<dbReference type="GO" id="GO:0003746">
    <property type="term" value="F:translation elongation factor activity"/>
    <property type="evidence" value="ECO:0007669"/>
    <property type="project" value="UniProtKB-UniRule"/>
</dbReference>
<dbReference type="GO" id="GO:0043043">
    <property type="term" value="P:peptide biosynthetic process"/>
    <property type="evidence" value="ECO:0007669"/>
    <property type="project" value="InterPro"/>
</dbReference>
<dbReference type="CDD" id="cd04470">
    <property type="entry name" value="S1_EF-P_repeat_1"/>
    <property type="match status" value="1"/>
</dbReference>
<dbReference type="CDD" id="cd05794">
    <property type="entry name" value="S1_EF-P_repeat_2"/>
    <property type="match status" value="1"/>
</dbReference>
<dbReference type="FunFam" id="2.30.30.30:FF:000010">
    <property type="entry name" value="Elongation factor P"/>
    <property type="match status" value="1"/>
</dbReference>
<dbReference type="FunFam" id="2.40.50.140:FF:000004">
    <property type="entry name" value="Elongation factor P"/>
    <property type="match status" value="1"/>
</dbReference>
<dbReference type="FunFam" id="2.40.50.140:FF:000009">
    <property type="entry name" value="Elongation factor P"/>
    <property type="match status" value="1"/>
</dbReference>
<dbReference type="Gene3D" id="2.30.30.30">
    <property type="match status" value="1"/>
</dbReference>
<dbReference type="Gene3D" id="2.40.50.140">
    <property type="entry name" value="Nucleic acid-binding proteins"/>
    <property type="match status" value="2"/>
</dbReference>
<dbReference type="HAMAP" id="MF_00141">
    <property type="entry name" value="EF_P"/>
    <property type="match status" value="1"/>
</dbReference>
<dbReference type="InterPro" id="IPR015365">
    <property type="entry name" value="Elong-fact-P_C"/>
</dbReference>
<dbReference type="InterPro" id="IPR012340">
    <property type="entry name" value="NA-bd_OB-fold"/>
</dbReference>
<dbReference type="InterPro" id="IPR014722">
    <property type="entry name" value="Rib_uL2_dom2"/>
</dbReference>
<dbReference type="InterPro" id="IPR020599">
    <property type="entry name" value="Transl_elong_fac_P/YeiP"/>
</dbReference>
<dbReference type="InterPro" id="IPR013185">
    <property type="entry name" value="Transl_elong_KOW-like"/>
</dbReference>
<dbReference type="InterPro" id="IPR001059">
    <property type="entry name" value="Transl_elong_P/YeiP_cen"/>
</dbReference>
<dbReference type="InterPro" id="IPR013852">
    <property type="entry name" value="Transl_elong_P/YeiP_CS"/>
</dbReference>
<dbReference type="InterPro" id="IPR011768">
    <property type="entry name" value="Transl_elongation_fac_P"/>
</dbReference>
<dbReference type="InterPro" id="IPR008991">
    <property type="entry name" value="Translation_prot_SH3-like_sf"/>
</dbReference>
<dbReference type="NCBIfam" id="TIGR00038">
    <property type="entry name" value="efp"/>
    <property type="match status" value="1"/>
</dbReference>
<dbReference type="NCBIfam" id="NF001810">
    <property type="entry name" value="PRK00529.1"/>
    <property type="match status" value="1"/>
</dbReference>
<dbReference type="PANTHER" id="PTHR30053">
    <property type="entry name" value="ELONGATION FACTOR P"/>
    <property type="match status" value="1"/>
</dbReference>
<dbReference type="PANTHER" id="PTHR30053:SF12">
    <property type="entry name" value="ELONGATION FACTOR P (EF-P) FAMILY PROTEIN"/>
    <property type="match status" value="1"/>
</dbReference>
<dbReference type="Pfam" id="PF01132">
    <property type="entry name" value="EFP"/>
    <property type="match status" value="1"/>
</dbReference>
<dbReference type="Pfam" id="PF08207">
    <property type="entry name" value="EFP_N"/>
    <property type="match status" value="1"/>
</dbReference>
<dbReference type="Pfam" id="PF09285">
    <property type="entry name" value="Elong-fact-P_C"/>
    <property type="match status" value="1"/>
</dbReference>
<dbReference type="PIRSF" id="PIRSF005901">
    <property type="entry name" value="EF-P"/>
    <property type="match status" value="1"/>
</dbReference>
<dbReference type="SMART" id="SM01185">
    <property type="entry name" value="EFP"/>
    <property type="match status" value="1"/>
</dbReference>
<dbReference type="SMART" id="SM00841">
    <property type="entry name" value="Elong-fact-P_C"/>
    <property type="match status" value="1"/>
</dbReference>
<dbReference type="SUPFAM" id="SSF50249">
    <property type="entry name" value="Nucleic acid-binding proteins"/>
    <property type="match status" value="2"/>
</dbReference>
<dbReference type="SUPFAM" id="SSF50104">
    <property type="entry name" value="Translation proteins SH3-like domain"/>
    <property type="match status" value="1"/>
</dbReference>
<dbReference type="PROSITE" id="PS01275">
    <property type="entry name" value="EFP"/>
    <property type="match status" value="1"/>
</dbReference>
<evidence type="ECO:0000255" key="1">
    <source>
        <dbReference type="HAMAP-Rule" id="MF_00141"/>
    </source>
</evidence>
<comment type="function">
    <text evidence="1">Involved in peptide bond synthesis. Stimulates efficient translation and peptide-bond synthesis on native or reconstituted 70S ribosomes in vitro. Probably functions indirectly by altering the affinity of the ribosome for aminoacyl-tRNA, thus increasing their reactivity as acceptors for peptidyl transferase.</text>
</comment>
<comment type="pathway">
    <text evidence="1">Protein biosynthesis; polypeptide chain elongation.</text>
</comment>
<comment type="subcellular location">
    <subcellularLocation>
        <location evidence="1">Cytoplasm</location>
    </subcellularLocation>
</comment>
<comment type="similarity">
    <text evidence="1">Belongs to the elongation factor P family.</text>
</comment>
<sequence>MISVNDFRTGLTIAVDNGLWQVLDFQHVKPGKGAAFVRSKLRNLRTGSVQEKTFRAGEKVEKAHIENRRMQYLYASGEAHVFMDNGTYEQIELGEKQIERELKFLKENMEVSIMTYQGEVLGVELPNTVELQVTETEPGIKGDTASNVTKPATLETGLVVQVPIFINEGEMLIINTGEGKYVSRA</sequence>
<protein>
    <recommendedName>
        <fullName evidence="1">Elongation factor P</fullName>
        <shortName evidence="1">EF-P</shortName>
    </recommendedName>
</protein>
<gene>
    <name evidence="1" type="primary">efp</name>
    <name type="ordered locus">BT9727_3939</name>
</gene>
<organism>
    <name type="scientific">Bacillus thuringiensis subsp. konkukian (strain 97-27)</name>
    <dbReference type="NCBI Taxonomy" id="281309"/>
    <lineage>
        <taxon>Bacteria</taxon>
        <taxon>Bacillati</taxon>
        <taxon>Bacillota</taxon>
        <taxon>Bacilli</taxon>
        <taxon>Bacillales</taxon>
        <taxon>Bacillaceae</taxon>
        <taxon>Bacillus</taxon>
        <taxon>Bacillus cereus group</taxon>
    </lineage>
</organism>
<proteinExistence type="inferred from homology"/>
<accession>Q6HDW8</accession>